<feature type="chain" id="PRO_1000017313" description="Biosynthetic peptidoglycan transglycosylase">
    <location>
        <begin position="1"/>
        <end position="236"/>
    </location>
</feature>
<feature type="transmembrane region" description="Helical" evidence="1">
    <location>
        <begin position="12"/>
        <end position="31"/>
    </location>
</feature>
<dbReference type="EC" id="2.4.99.28" evidence="1"/>
<dbReference type="EMBL" id="CP000712">
    <property type="protein sequence ID" value="ABQ81100.1"/>
    <property type="molecule type" value="Genomic_DNA"/>
</dbReference>
<dbReference type="SMR" id="A5WAE0"/>
<dbReference type="CAZy" id="GT51">
    <property type="family name" value="Glycosyltransferase Family 51"/>
</dbReference>
<dbReference type="KEGG" id="ppf:Pput_4980"/>
<dbReference type="eggNOG" id="COG0744">
    <property type="taxonomic scope" value="Bacteria"/>
</dbReference>
<dbReference type="HOGENOM" id="CLU_006354_1_1_6"/>
<dbReference type="UniPathway" id="UPA00219"/>
<dbReference type="GO" id="GO:0009274">
    <property type="term" value="C:peptidoglycan-based cell wall"/>
    <property type="evidence" value="ECO:0007669"/>
    <property type="project" value="InterPro"/>
</dbReference>
<dbReference type="GO" id="GO:0005886">
    <property type="term" value="C:plasma membrane"/>
    <property type="evidence" value="ECO:0007669"/>
    <property type="project" value="UniProtKB-SubCell"/>
</dbReference>
<dbReference type="GO" id="GO:0016763">
    <property type="term" value="F:pentosyltransferase activity"/>
    <property type="evidence" value="ECO:0007669"/>
    <property type="project" value="InterPro"/>
</dbReference>
<dbReference type="GO" id="GO:0008955">
    <property type="term" value="F:peptidoglycan glycosyltransferase activity"/>
    <property type="evidence" value="ECO:0007669"/>
    <property type="project" value="UniProtKB-UniRule"/>
</dbReference>
<dbReference type="GO" id="GO:0071555">
    <property type="term" value="P:cell wall organization"/>
    <property type="evidence" value="ECO:0007669"/>
    <property type="project" value="UniProtKB-KW"/>
</dbReference>
<dbReference type="GO" id="GO:0009252">
    <property type="term" value="P:peptidoglycan biosynthetic process"/>
    <property type="evidence" value="ECO:0007669"/>
    <property type="project" value="UniProtKB-UniRule"/>
</dbReference>
<dbReference type="GO" id="GO:0008360">
    <property type="term" value="P:regulation of cell shape"/>
    <property type="evidence" value="ECO:0007669"/>
    <property type="project" value="UniProtKB-KW"/>
</dbReference>
<dbReference type="Gene3D" id="1.10.3810.10">
    <property type="entry name" value="Biosynthetic peptidoglycan transglycosylase-like"/>
    <property type="match status" value="1"/>
</dbReference>
<dbReference type="HAMAP" id="MF_00766">
    <property type="entry name" value="PGT_MtgA"/>
    <property type="match status" value="1"/>
</dbReference>
<dbReference type="InterPro" id="IPR001264">
    <property type="entry name" value="Glyco_trans_51"/>
</dbReference>
<dbReference type="InterPro" id="IPR023346">
    <property type="entry name" value="Lysozyme-like_dom_sf"/>
</dbReference>
<dbReference type="InterPro" id="IPR036950">
    <property type="entry name" value="PBP_transglycosylase"/>
</dbReference>
<dbReference type="InterPro" id="IPR011812">
    <property type="entry name" value="Pep_trsgly"/>
</dbReference>
<dbReference type="NCBIfam" id="TIGR02070">
    <property type="entry name" value="mono_pep_trsgly"/>
    <property type="match status" value="1"/>
</dbReference>
<dbReference type="PANTHER" id="PTHR30400:SF0">
    <property type="entry name" value="BIOSYNTHETIC PEPTIDOGLYCAN TRANSGLYCOSYLASE"/>
    <property type="match status" value="1"/>
</dbReference>
<dbReference type="PANTHER" id="PTHR30400">
    <property type="entry name" value="MONOFUNCTIONAL BIOSYNTHETIC PEPTIDOGLYCAN TRANSGLYCOSYLASE"/>
    <property type="match status" value="1"/>
</dbReference>
<dbReference type="Pfam" id="PF00912">
    <property type="entry name" value="Transgly"/>
    <property type="match status" value="1"/>
</dbReference>
<dbReference type="SUPFAM" id="SSF53955">
    <property type="entry name" value="Lysozyme-like"/>
    <property type="match status" value="1"/>
</dbReference>
<protein>
    <recommendedName>
        <fullName evidence="1">Biosynthetic peptidoglycan transglycosylase</fullName>
        <ecNumber evidence="1">2.4.99.28</ecNumber>
    </recommendedName>
    <alternativeName>
        <fullName evidence="1">Glycan polymerase</fullName>
    </alternativeName>
    <alternativeName>
        <fullName evidence="1">Peptidoglycan glycosyltransferase MtgA</fullName>
        <shortName evidence="1">PGT</shortName>
    </alternativeName>
</protein>
<accession>A5WAE0</accession>
<keyword id="KW-0997">Cell inner membrane</keyword>
<keyword id="KW-1003">Cell membrane</keyword>
<keyword id="KW-0133">Cell shape</keyword>
<keyword id="KW-0961">Cell wall biogenesis/degradation</keyword>
<keyword id="KW-0328">Glycosyltransferase</keyword>
<keyword id="KW-0472">Membrane</keyword>
<keyword id="KW-0573">Peptidoglycan synthesis</keyword>
<keyword id="KW-0808">Transferase</keyword>
<keyword id="KW-0812">Transmembrane</keyword>
<keyword id="KW-1133">Transmembrane helix</keyword>
<sequence>MLSTLIRRLSRALLWFVAGSIVLVLVFRWVPPPGTALMVERKVQSWVNGEPIDLQRDWEPWENISDELKVAVIAGEDQKFANHWGFDLPAIQAALAHNERGGNIRGASTLTQQVAKNLFLWSGRSWFRKGLEAWFTALIELFWSKERILEVYLNSAEWGKGVFGAQAAARYHFGVDASRLSRQQAAQLAAVLPSPIKWSASRPSAYVASRAGWIRRQMSQLGGPSYLMQLDSSRKL</sequence>
<name>MTGA_PSEP1</name>
<comment type="function">
    <text evidence="1">Peptidoglycan polymerase that catalyzes glycan chain elongation from lipid-linked precursors.</text>
</comment>
<comment type="catalytic activity">
    <reaction evidence="1">
        <text>[GlcNAc-(1-&gt;4)-Mur2Ac(oyl-L-Ala-gamma-D-Glu-L-Lys-D-Ala-D-Ala)](n)-di-trans,octa-cis-undecaprenyl diphosphate + beta-D-GlcNAc-(1-&gt;4)-Mur2Ac(oyl-L-Ala-gamma-D-Glu-L-Lys-D-Ala-D-Ala)-di-trans,octa-cis-undecaprenyl diphosphate = [GlcNAc-(1-&gt;4)-Mur2Ac(oyl-L-Ala-gamma-D-Glu-L-Lys-D-Ala-D-Ala)](n+1)-di-trans,octa-cis-undecaprenyl diphosphate + di-trans,octa-cis-undecaprenyl diphosphate + H(+)</text>
        <dbReference type="Rhea" id="RHEA:23708"/>
        <dbReference type="Rhea" id="RHEA-COMP:9602"/>
        <dbReference type="Rhea" id="RHEA-COMP:9603"/>
        <dbReference type="ChEBI" id="CHEBI:15378"/>
        <dbReference type="ChEBI" id="CHEBI:58405"/>
        <dbReference type="ChEBI" id="CHEBI:60033"/>
        <dbReference type="ChEBI" id="CHEBI:78435"/>
        <dbReference type="EC" id="2.4.99.28"/>
    </reaction>
</comment>
<comment type="pathway">
    <text evidence="1">Cell wall biogenesis; peptidoglycan biosynthesis.</text>
</comment>
<comment type="subcellular location">
    <subcellularLocation>
        <location evidence="1">Cell inner membrane</location>
        <topology evidence="1">Single-pass membrane protein</topology>
    </subcellularLocation>
</comment>
<comment type="similarity">
    <text evidence="1">Belongs to the glycosyltransferase 51 family.</text>
</comment>
<proteinExistence type="inferred from homology"/>
<gene>
    <name evidence="1" type="primary">mtgA</name>
    <name type="ordered locus">Pput_4980</name>
</gene>
<reference key="1">
    <citation type="submission" date="2007-05" db="EMBL/GenBank/DDBJ databases">
        <title>Complete sequence of Pseudomonas putida F1.</title>
        <authorList>
            <consortium name="US DOE Joint Genome Institute"/>
            <person name="Copeland A."/>
            <person name="Lucas S."/>
            <person name="Lapidus A."/>
            <person name="Barry K."/>
            <person name="Detter J.C."/>
            <person name="Glavina del Rio T."/>
            <person name="Hammon N."/>
            <person name="Israni S."/>
            <person name="Dalin E."/>
            <person name="Tice H."/>
            <person name="Pitluck S."/>
            <person name="Chain P."/>
            <person name="Malfatti S."/>
            <person name="Shin M."/>
            <person name="Vergez L."/>
            <person name="Schmutz J."/>
            <person name="Larimer F."/>
            <person name="Land M."/>
            <person name="Hauser L."/>
            <person name="Kyrpides N."/>
            <person name="Lykidis A."/>
            <person name="Parales R."/>
            <person name="Richardson P."/>
        </authorList>
    </citation>
    <scope>NUCLEOTIDE SEQUENCE [LARGE SCALE GENOMIC DNA]</scope>
    <source>
        <strain>ATCC 700007 / DSM 6899 / JCM 31910 / BCRC 17059 / LMG 24140 / F1</strain>
    </source>
</reference>
<evidence type="ECO:0000255" key="1">
    <source>
        <dbReference type="HAMAP-Rule" id="MF_00766"/>
    </source>
</evidence>
<organism>
    <name type="scientific">Pseudomonas putida (strain ATCC 700007 / DSM 6899 / JCM 31910 / BCRC 17059 / LMG 24140 / F1)</name>
    <dbReference type="NCBI Taxonomy" id="351746"/>
    <lineage>
        <taxon>Bacteria</taxon>
        <taxon>Pseudomonadati</taxon>
        <taxon>Pseudomonadota</taxon>
        <taxon>Gammaproteobacteria</taxon>
        <taxon>Pseudomonadales</taxon>
        <taxon>Pseudomonadaceae</taxon>
        <taxon>Pseudomonas</taxon>
    </lineage>
</organism>